<keyword id="KW-0520">NAD</keyword>
<keyword id="KW-0560">Oxidoreductase</keyword>
<keyword id="KW-1185">Reference proteome</keyword>
<comment type="function">
    <text evidence="1">Putative 2-hydroxyacid dehydrogenase.</text>
</comment>
<comment type="induction">
    <text evidence="2">Glucose-repressed.</text>
</comment>
<comment type="similarity">
    <text evidence="3">Belongs to the D-isomer specific 2-hydroxyacid dehydrogenase family.</text>
</comment>
<feature type="chain" id="PRO_0000234369" description="Putative 2-hydroxyacid dehydrogenase YPL113C">
    <location>
        <begin position="1"/>
        <end position="396"/>
    </location>
</feature>
<feature type="active site" evidence="1">
    <location>
        <position position="313"/>
    </location>
</feature>
<feature type="active site" evidence="1">
    <location>
        <position position="342"/>
    </location>
</feature>
<feature type="active site" description="Proton donor" evidence="1">
    <location>
        <position position="361"/>
    </location>
</feature>
<feature type="binding site" evidence="1">
    <location>
        <begin position="227"/>
        <end position="228"/>
    </location>
    <ligand>
        <name>NAD(+)</name>
        <dbReference type="ChEBI" id="CHEBI:57540"/>
    </ligand>
</feature>
<feature type="binding site" evidence="1">
    <location>
        <begin position="311"/>
        <end position="313"/>
    </location>
    <ligand>
        <name>NAD(+)</name>
        <dbReference type="ChEBI" id="CHEBI:57540"/>
    </ligand>
</feature>
<feature type="binding site" evidence="1">
    <location>
        <position position="337"/>
    </location>
    <ligand>
        <name>NAD(+)</name>
        <dbReference type="ChEBI" id="CHEBI:57540"/>
    </ligand>
</feature>
<feature type="binding site" evidence="1">
    <location>
        <begin position="361"/>
        <end position="364"/>
    </location>
    <ligand>
        <name>NAD(+)</name>
        <dbReference type="ChEBI" id="CHEBI:57540"/>
    </ligand>
</feature>
<name>YP113_YEAST</name>
<protein>
    <recommendedName>
        <fullName>Putative 2-hydroxyacid dehydrogenase YPL113C</fullName>
        <ecNumber>1.-.-.-</ecNumber>
    </recommendedName>
</protein>
<dbReference type="EC" id="1.-.-.-"/>
<dbReference type="EMBL" id="U43503">
    <property type="protein sequence ID" value="AAB68248.1"/>
    <property type="molecule type" value="Genomic_DNA"/>
</dbReference>
<dbReference type="EMBL" id="BK006949">
    <property type="protein sequence ID" value="DAA11320.1"/>
    <property type="molecule type" value="Genomic_DNA"/>
</dbReference>
<dbReference type="PIR" id="S62008">
    <property type="entry name" value="S62008"/>
</dbReference>
<dbReference type="RefSeq" id="NP_015212.1">
    <property type="nucleotide sequence ID" value="NM_001183927.1"/>
</dbReference>
<dbReference type="SMR" id="Q02961"/>
<dbReference type="BioGRID" id="36067">
    <property type="interactions" value="70"/>
</dbReference>
<dbReference type="DIP" id="DIP-6633N"/>
<dbReference type="FunCoup" id="Q02961">
    <property type="interactions" value="67"/>
</dbReference>
<dbReference type="IntAct" id="Q02961">
    <property type="interactions" value="1"/>
</dbReference>
<dbReference type="STRING" id="4932.YPL113C"/>
<dbReference type="GlyGen" id="Q02961">
    <property type="glycosylation" value="2 sites, 1 O-linked glycan (2 sites)"/>
</dbReference>
<dbReference type="PaxDb" id="4932-YPL113C"/>
<dbReference type="PeptideAtlas" id="Q02961"/>
<dbReference type="EnsemblFungi" id="YPL113C_mRNA">
    <property type="protein sequence ID" value="YPL113C"/>
    <property type="gene ID" value="YPL113C"/>
</dbReference>
<dbReference type="GeneID" id="855990"/>
<dbReference type="KEGG" id="sce:YPL113C"/>
<dbReference type="AGR" id="SGD:S000006034"/>
<dbReference type="SGD" id="S000006034">
    <property type="gene designation" value="YPL113C"/>
</dbReference>
<dbReference type="VEuPathDB" id="FungiDB:YPL113C"/>
<dbReference type="eggNOG" id="KOG0069">
    <property type="taxonomic scope" value="Eukaryota"/>
</dbReference>
<dbReference type="GeneTree" id="ENSGT00940000176460"/>
<dbReference type="HOGENOM" id="CLU_019796_1_2_1"/>
<dbReference type="InParanoid" id="Q02961"/>
<dbReference type="OMA" id="RGSCIDE"/>
<dbReference type="OrthoDB" id="298012at2759"/>
<dbReference type="BioCyc" id="YEAST:G3O-34014-MONOMER"/>
<dbReference type="BioGRID-ORCS" id="855990">
    <property type="hits" value="1 hit in 10 CRISPR screens"/>
</dbReference>
<dbReference type="PRO" id="PR:Q02961"/>
<dbReference type="Proteomes" id="UP000002311">
    <property type="component" value="Chromosome XVI"/>
</dbReference>
<dbReference type="RNAct" id="Q02961">
    <property type="molecule type" value="protein"/>
</dbReference>
<dbReference type="GO" id="GO:0005829">
    <property type="term" value="C:cytosol"/>
    <property type="evidence" value="ECO:0000318"/>
    <property type="project" value="GO_Central"/>
</dbReference>
<dbReference type="GO" id="GO:0030267">
    <property type="term" value="F:glyoxylate reductase (NADPH) activity"/>
    <property type="evidence" value="ECO:0000318"/>
    <property type="project" value="GO_Central"/>
</dbReference>
<dbReference type="GO" id="GO:0016618">
    <property type="term" value="F:hydroxypyruvate reductase [NAD(P)H] activity"/>
    <property type="evidence" value="ECO:0000318"/>
    <property type="project" value="GO_Central"/>
</dbReference>
<dbReference type="GO" id="GO:0051287">
    <property type="term" value="F:NAD binding"/>
    <property type="evidence" value="ECO:0007669"/>
    <property type="project" value="InterPro"/>
</dbReference>
<dbReference type="GO" id="GO:0016616">
    <property type="term" value="F:oxidoreductase activity, acting on the CH-OH group of donors, NAD or NADP as acceptor"/>
    <property type="evidence" value="ECO:0000315"/>
    <property type="project" value="SGD"/>
</dbReference>
<dbReference type="CDD" id="cd12168">
    <property type="entry name" value="Mand_dh_like"/>
    <property type="match status" value="1"/>
</dbReference>
<dbReference type="Gene3D" id="3.40.50.720">
    <property type="entry name" value="NAD(P)-binding Rossmann-like Domain"/>
    <property type="match status" value="2"/>
</dbReference>
<dbReference type="InterPro" id="IPR050223">
    <property type="entry name" value="D-isomer_2-hydroxyacid_DH"/>
</dbReference>
<dbReference type="InterPro" id="IPR006140">
    <property type="entry name" value="D-isomer_DH_NAD-bd"/>
</dbReference>
<dbReference type="InterPro" id="IPR036291">
    <property type="entry name" value="NAD(P)-bd_dom_sf"/>
</dbReference>
<dbReference type="PANTHER" id="PTHR10996:SF279">
    <property type="entry name" value="2-HYDROXYACID DEHYDROGENASE YPL113C-RELATED"/>
    <property type="match status" value="1"/>
</dbReference>
<dbReference type="PANTHER" id="PTHR10996">
    <property type="entry name" value="2-HYDROXYACID DEHYDROGENASE-RELATED"/>
    <property type="match status" value="1"/>
</dbReference>
<dbReference type="Pfam" id="PF02826">
    <property type="entry name" value="2-Hacid_dh_C"/>
    <property type="match status" value="1"/>
</dbReference>
<dbReference type="SUPFAM" id="SSF52283">
    <property type="entry name" value="Formate/glycerate dehydrogenase catalytic domain-like"/>
    <property type="match status" value="1"/>
</dbReference>
<dbReference type="SUPFAM" id="SSF51735">
    <property type="entry name" value="NAD(P)-binding Rossmann-fold domains"/>
    <property type="match status" value="1"/>
</dbReference>
<sequence length="396" mass="45014">MITSIDIADVTYSAKPRILVPYKTQWEVASHLPEYRKLAERVEFYKYEMSTKDDFVKFLETHRINGFWLTEEFFTVLGNPSSYIEFFPASLKVILVPWVGCDFIDGKLLRSKGITLCNIGPHAADHVTELAIFLAISCFRMTSFWEYCFKYVENGNVEQCKKYISSDSYEIVTDSYHGQEMKFPSRTDKCKPNKDRKVVHLAEKYTVGGKKMESPMNKKVLILGFGSIGQNIGSNLHKVFNMSIEYYKRTGPVQKSLLDYNAKYHSDLDDPNTWKNADLIILALPSTASTNNIINRKSLAWCKDGVRIVNVGRGTCIDEDVLLDALESGKVASCGLDVFKNEETRVKQELLRRWDVTALPHIGSTVADMVIKQTLITLENVQDIFVEGGDGKYVLN</sequence>
<organism>
    <name type="scientific">Saccharomyces cerevisiae (strain ATCC 204508 / S288c)</name>
    <name type="common">Baker's yeast</name>
    <dbReference type="NCBI Taxonomy" id="559292"/>
    <lineage>
        <taxon>Eukaryota</taxon>
        <taxon>Fungi</taxon>
        <taxon>Dikarya</taxon>
        <taxon>Ascomycota</taxon>
        <taxon>Saccharomycotina</taxon>
        <taxon>Saccharomycetes</taxon>
        <taxon>Saccharomycetales</taxon>
        <taxon>Saccharomycetaceae</taxon>
        <taxon>Saccharomyces</taxon>
    </lineage>
</organism>
<reference key="1">
    <citation type="journal article" date="1997" name="Nature">
        <title>The nucleotide sequence of Saccharomyces cerevisiae chromosome XVI.</title>
        <authorList>
            <person name="Bussey H."/>
            <person name="Storms R.K."/>
            <person name="Ahmed A."/>
            <person name="Albermann K."/>
            <person name="Allen E."/>
            <person name="Ansorge W."/>
            <person name="Araujo R."/>
            <person name="Aparicio A."/>
            <person name="Barrell B.G."/>
            <person name="Badcock K."/>
            <person name="Benes V."/>
            <person name="Botstein D."/>
            <person name="Bowman S."/>
            <person name="Brueckner M."/>
            <person name="Carpenter J."/>
            <person name="Cherry J.M."/>
            <person name="Chung E."/>
            <person name="Churcher C.M."/>
            <person name="Coster F."/>
            <person name="Davis K."/>
            <person name="Davis R.W."/>
            <person name="Dietrich F.S."/>
            <person name="Delius H."/>
            <person name="DiPaolo T."/>
            <person name="Dubois E."/>
            <person name="Duesterhoeft A."/>
            <person name="Duncan M."/>
            <person name="Floeth M."/>
            <person name="Fortin N."/>
            <person name="Friesen J.D."/>
            <person name="Fritz C."/>
            <person name="Goffeau A."/>
            <person name="Hall J."/>
            <person name="Hebling U."/>
            <person name="Heumann K."/>
            <person name="Hilbert H."/>
            <person name="Hillier L.W."/>
            <person name="Hunicke-Smith S."/>
            <person name="Hyman R.W."/>
            <person name="Johnston M."/>
            <person name="Kalman S."/>
            <person name="Kleine K."/>
            <person name="Komp C."/>
            <person name="Kurdi O."/>
            <person name="Lashkari D."/>
            <person name="Lew H."/>
            <person name="Lin A."/>
            <person name="Lin D."/>
            <person name="Louis E.J."/>
            <person name="Marathe R."/>
            <person name="Messenguy F."/>
            <person name="Mewes H.-W."/>
            <person name="Mirtipati S."/>
            <person name="Moestl D."/>
            <person name="Mueller-Auer S."/>
            <person name="Namath A."/>
            <person name="Nentwich U."/>
            <person name="Oefner P."/>
            <person name="Pearson D."/>
            <person name="Petel F.X."/>
            <person name="Pohl T.M."/>
            <person name="Purnelle B."/>
            <person name="Rajandream M.A."/>
            <person name="Rechmann S."/>
            <person name="Rieger M."/>
            <person name="Riles L."/>
            <person name="Roberts D."/>
            <person name="Schaefer M."/>
            <person name="Scharfe M."/>
            <person name="Scherens B."/>
            <person name="Schramm S."/>
            <person name="Schroeder M."/>
            <person name="Sdicu A.-M."/>
            <person name="Tettelin H."/>
            <person name="Urrestarazu L.A."/>
            <person name="Ushinsky S."/>
            <person name="Vierendeels F."/>
            <person name="Vissers S."/>
            <person name="Voss H."/>
            <person name="Walsh S.V."/>
            <person name="Wambutt R."/>
            <person name="Wang Y."/>
            <person name="Wedler E."/>
            <person name="Wedler H."/>
            <person name="Winnett E."/>
            <person name="Zhong W.-W."/>
            <person name="Zollner A."/>
            <person name="Vo D.H."/>
            <person name="Hani J."/>
        </authorList>
    </citation>
    <scope>NUCLEOTIDE SEQUENCE [LARGE SCALE GENOMIC DNA]</scope>
    <source>
        <strain>ATCC 204508 / S288c</strain>
    </source>
</reference>
<reference key="2">
    <citation type="journal article" date="2014" name="G3 (Bethesda)">
        <title>The reference genome sequence of Saccharomyces cerevisiae: Then and now.</title>
        <authorList>
            <person name="Engel S.R."/>
            <person name="Dietrich F.S."/>
            <person name="Fisk D.G."/>
            <person name="Binkley G."/>
            <person name="Balakrishnan R."/>
            <person name="Costanzo M.C."/>
            <person name="Dwight S.S."/>
            <person name="Hitz B.C."/>
            <person name="Karra K."/>
            <person name="Nash R.S."/>
            <person name="Weng S."/>
            <person name="Wong E.D."/>
            <person name="Lloyd P."/>
            <person name="Skrzypek M.S."/>
            <person name="Miyasato S.R."/>
            <person name="Simison M."/>
            <person name="Cherry J.M."/>
        </authorList>
    </citation>
    <scope>GENOME REANNOTATION</scope>
    <source>
        <strain>ATCC 204508 / S288c</strain>
    </source>
</reference>
<reference key="3">
    <citation type="journal article" date="2003" name="J. Biol. Chem.">
        <title>Ser3p (Yer081wp) and Ser33p (Yil074cp) are phosphoglycerate dehydrogenases in Saccharomyces cerevisiae.</title>
        <authorList>
            <person name="Albers E."/>
            <person name="Laize V."/>
            <person name="Blomberg A."/>
            <person name="Hohmann S."/>
            <person name="Gustafsson L."/>
        </authorList>
    </citation>
    <scope>INDUCTION</scope>
</reference>
<gene>
    <name type="ordered locus">YPL113C</name>
</gene>
<evidence type="ECO:0000250" key="1"/>
<evidence type="ECO:0000269" key="2">
    <source>
    </source>
</evidence>
<evidence type="ECO:0000305" key="3"/>
<proteinExistence type="evidence at transcript level"/>
<accession>Q02961</accession>
<accession>D6W3Q4</accession>